<organism>
    <name type="scientific">Staphylococcus aureus (strain MSSA476)</name>
    <dbReference type="NCBI Taxonomy" id="282459"/>
    <lineage>
        <taxon>Bacteria</taxon>
        <taxon>Bacillati</taxon>
        <taxon>Bacillota</taxon>
        <taxon>Bacilli</taxon>
        <taxon>Bacillales</taxon>
        <taxon>Staphylococcaceae</taxon>
        <taxon>Staphylococcus</taxon>
    </lineage>
</organism>
<comment type="function">
    <text evidence="1">Catalyzes the formation of 6,7-dimethyl-8-ribityllumazine by condensation of 5-amino-6-(D-ribitylamino)uracil with 3,4-dihydroxy-2-butanone 4-phosphate. This is the penultimate step in the biosynthesis of riboflavin.</text>
</comment>
<comment type="catalytic activity">
    <reaction evidence="1">
        <text>(2S)-2-hydroxy-3-oxobutyl phosphate + 5-amino-6-(D-ribitylamino)uracil = 6,7-dimethyl-8-(1-D-ribityl)lumazine + phosphate + 2 H2O + H(+)</text>
        <dbReference type="Rhea" id="RHEA:26152"/>
        <dbReference type="ChEBI" id="CHEBI:15377"/>
        <dbReference type="ChEBI" id="CHEBI:15378"/>
        <dbReference type="ChEBI" id="CHEBI:15934"/>
        <dbReference type="ChEBI" id="CHEBI:43474"/>
        <dbReference type="ChEBI" id="CHEBI:58201"/>
        <dbReference type="ChEBI" id="CHEBI:58830"/>
        <dbReference type="EC" id="2.5.1.78"/>
    </reaction>
</comment>
<comment type="pathway">
    <text evidence="1">Cofactor biosynthesis; riboflavin biosynthesis; riboflavin from 2-hydroxy-3-oxobutyl phosphate and 5-amino-6-(D-ribitylamino)uracil: step 1/2.</text>
</comment>
<comment type="subunit">
    <text evidence="1">Forms an icosahedral capsid composed of 60 subunits, arranged as a dodecamer of pentamers.</text>
</comment>
<comment type="similarity">
    <text evidence="1">Belongs to the DMRL synthase family.</text>
</comment>
<protein>
    <recommendedName>
        <fullName evidence="1">6,7-dimethyl-8-ribityllumazine synthase</fullName>
        <shortName evidence="1">DMRL synthase</shortName>
        <shortName evidence="1">LS</shortName>
        <shortName evidence="1">Lumazine synthase</shortName>
        <ecNumber evidence="1">2.5.1.78</ecNumber>
    </recommendedName>
</protein>
<evidence type="ECO:0000255" key="1">
    <source>
        <dbReference type="HAMAP-Rule" id="MF_00178"/>
    </source>
</evidence>
<accession>Q6G8G2</accession>
<sequence length="154" mass="16410">MNFEGKLIGKDLKVAIVVSRFNDFITGRLLEGAKDTLIRHDVNEDNIDVAFVPGAFEIPLVAKKLASSGNYDAIITLGCVIRGATSHYDYVCNEVAKGVSKVNDQTNVPVIFGILTTESIEQAVERAGTKAGNKGAEAAVSAIEMANLLKSIKA</sequence>
<dbReference type="EC" id="2.5.1.78" evidence="1"/>
<dbReference type="EMBL" id="BX571857">
    <property type="protein sequence ID" value="CAG43494.1"/>
    <property type="molecule type" value="Genomic_DNA"/>
</dbReference>
<dbReference type="SMR" id="Q6G8G2"/>
<dbReference type="KEGG" id="sas:SAS1691"/>
<dbReference type="HOGENOM" id="CLU_089358_1_1_9"/>
<dbReference type="UniPathway" id="UPA00275">
    <property type="reaction ID" value="UER00404"/>
</dbReference>
<dbReference type="GO" id="GO:0005829">
    <property type="term" value="C:cytosol"/>
    <property type="evidence" value="ECO:0007669"/>
    <property type="project" value="TreeGrafter"/>
</dbReference>
<dbReference type="GO" id="GO:0009349">
    <property type="term" value="C:riboflavin synthase complex"/>
    <property type="evidence" value="ECO:0007669"/>
    <property type="project" value="InterPro"/>
</dbReference>
<dbReference type="GO" id="GO:0000906">
    <property type="term" value="F:6,7-dimethyl-8-ribityllumazine synthase activity"/>
    <property type="evidence" value="ECO:0007669"/>
    <property type="project" value="UniProtKB-UniRule"/>
</dbReference>
<dbReference type="GO" id="GO:0009231">
    <property type="term" value="P:riboflavin biosynthetic process"/>
    <property type="evidence" value="ECO:0007669"/>
    <property type="project" value="UniProtKB-UniRule"/>
</dbReference>
<dbReference type="CDD" id="cd09209">
    <property type="entry name" value="Lumazine_synthase-I"/>
    <property type="match status" value="1"/>
</dbReference>
<dbReference type="FunFam" id="3.40.50.960:FF:000001">
    <property type="entry name" value="6,7-dimethyl-8-ribityllumazine synthase"/>
    <property type="match status" value="1"/>
</dbReference>
<dbReference type="Gene3D" id="3.40.50.960">
    <property type="entry name" value="Lumazine/riboflavin synthase"/>
    <property type="match status" value="1"/>
</dbReference>
<dbReference type="HAMAP" id="MF_00178">
    <property type="entry name" value="Lumazine_synth"/>
    <property type="match status" value="1"/>
</dbReference>
<dbReference type="InterPro" id="IPR034964">
    <property type="entry name" value="LS"/>
</dbReference>
<dbReference type="InterPro" id="IPR002180">
    <property type="entry name" value="LS/RS"/>
</dbReference>
<dbReference type="InterPro" id="IPR036467">
    <property type="entry name" value="LS/RS_sf"/>
</dbReference>
<dbReference type="NCBIfam" id="TIGR00114">
    <property type="entry name" value="lumazine-synth"/>
    <property type="match status" value="1"/>
</dbReference>
<dbReference type="NCBIfam" id="NF000812">
    <property type="entry name" value="PRK00061.1-4"/>
    <property type="match status" value="1"/>
</dbReference>
<dbReference type="PANTHER" id="PTHR21058:SF0">
    <property type="entry name" value="6,7-DIMETHYL-8-RIBITYLLUMAZINE SYNTHASE"/>
    <property type="match status" value="1"/>
</dbReference>
<dbReference type="PANTHER" id="PTHR21058">
    <property type="entry name" value="6,7-DIMETHYL-8-RIBITYLLUMAZINE SYNTHASE DMRL SYNTHASE LUMAZINE SYNTHASE"/>
    <property type="match status" value="1"/>
</dbReference>
<dbReference type="Pfam" id="PF00885">
    <property type="entry name" value="DMRL_synthase"/>
    <property type="match status" value="1"/>
</dbReference>
<dbReference type="SUPFAM" id="SSF52121">
    <property type="entry name" value="Lumazine synthase"/>
    <property type="match status" value="1"/>
</dbReference>
<name>RISB_STAAS</name>
<keyword id="KW-0686">Riboflavin biosynthesis</keyword>
<keyword id="KW-0808">Transferase</keyword>
<gene>
    <name evidence="1" type="primary">ribH</name>
    <name type="ordered locus">SAS1691</name>
</gene>
<proteinExistence type="inferred from homology"/>
<reference key="1">
    <citation type="journal article" date="2004" name="Proc. Natl. Acad. Sci. U.S.A.">
        <title>Complete genomes of two clinical Staphylococcus aureus strains: evidence for the rapid evolution of virulence and drug resistance.</title>
        <authorList>
            <person name="Holden M.T.G."/>
            <person name="Feil E.J."/>
            <person name="Lindsay J.A."/>
            <person name="Peacock S.J."/>
            <person name="Day N.P.J."/>
            <person name="Enright M.C."/>
            <person name="Foster T.J."/>
            <person name="Moore C.E."/>
            <person name="Hurst L."/>
            <person name="Atkin R."/>
            <person name="Barron A."/>
            <person name="Bason N."/>
            <person name="Bentley S.D."/>
            <person name="Chillingworth C."/>
            <person name="Chillingworth T."/>
            <person name="Churcher C."/>
            <person name="Clark L."/>
            <person name="Corton C."/>
            <person name="Cronin A."/>
            <person name="Doggett J."/>
            <person name="Dowd L."/>
            <person name="Feltwell T."/>
            <person name="Hance Z."/>
            <person name="Harris B."/>
            <person name="Hauser H."/>
            <person name="Holroyd S."/>
            <person name="Jagels K."/>
            <person name="James K.D."/>
            <person name="Lennard N."/>
            <person name="Line A."/>
            <person name="Mayes R."/>
            <person name="Moule S."/>
            <person name="Mungall K."/>
            <person name="Ormond D."/>
            <person name="Quail M.A."/>
            <person name="Rabbinowitsch E."/>
            <person name="Rutherford K.M."/>
            <person name="Sanders M."/>
            <person name="Sharp S."/>
            <person name="Simmonds M."/>
            <person name="Stevens K."/>
            <person name="Whitehead S."/>
            <person name="Barrell B.G."/>
            <person name="Spratt B.G."/>
            <person name="Parkhill J."/>
        </authorList>
    </citation>
    <scope>NUCLEOTIDE SEQUENCE [LARGE SCALE GENOMIC DNA]</scope>
    <source>
        <strain>MSSA476</strain>
    </source>
</reference>
<feature type="chain" id="PRO_0000134808" description="6,7-dimethyl-8-ribityllumazine synthase">
    <location>
        <begin position="1"/>
        <end position="154"/>
    </location>
</feature>
<feature type="active site" description="Proton donor" evidence="1">
    <location>
        <position position="87"/>
    </location>
</feature>
<feature type="binding site" evidence="1">
    <location>
        <position position="21"/>
    </location>
    <ligand>
        <name>5-amino-6-(D-ribitylamino)uracil</name>
        <dbReference type="ChEBI" id="CHEBI:15934"/>
    </ligand>
</feature>
<feature type="binding site" evidence="1">
    <location>
        <begin position="55"/>
        <end position="57"/>
    </location>
    <ligand>
        <name>5-amino-6-(D-ribitylamino)uracil</name>
        <dbReference type="ChEBI" id="CHEBI:15934"/>
    </ligand>
</feature>
<feature type="binding site" evidence="1">
    <location>
        <begin position="79"/>
        <end position="81"/>
    </location>
    <ligand>
        <name>5-amino-6-(D-ribitylamino)uracil</name>
        <dbReference type="ChEBI" id="CHEBI:15934"/>
    </ligand>
</feature>
<feature type="binding site" evidence="1">
    <location>
        <begin position="84"/>
        <end position="85"/>
    </location>
    <ligand>
        <name>(2S)-2-hydroxy-3-oxobutyl phosphate</name>
        <dbReference type="ChEBI" id="CHEBI:58830"/>
    </ligand>
</feature>
<feature type="binding site" evidence="1">
    <location>
        <position position="112"/>
    </location>
    <ligand>
        <name>5-amino-6-(D-ribitylamino)uracil</name>
        <dbReference type="ChEBI" id="CHEBI:15934"/>
    </ligand>
</feature>
<feature type="binding site" evidence="1">
    <location>
        <position position="126"/>
    </location>
    <ligand>
        <name>(2S)-2-hydroxy-3-oxobutyl phosphate</name>
        <dbReference type="ChEBI" id="CHEBI:58830"/>
    </ligand>
</feature>